<name>UVRC_THEP1</name>
<reference key="1">
    <citation type="submission" date="2007-05" db="EMBL/GenBank/DDBJ databases">
        <title>Complete sequence of Thermotoga petrophila RKU-1.</title>
        <authorList>
            <consortium name="US DOE Joint Genome Institute"/>
            <person name="Copeland A."/>
            <person name="Lucas S."/>
            <person name="Lapidus A."/>
            <person name="Barry K."/>
            <person name="Glavina del Rio T."/>
            <person name="Dalin E."/>
            <person name="Tice H."/>
            <person name="Pitluck S."/>
            <person name="Sims D."/>
            <person name="Brettin T."/>
            <person name="Bruce D."/>
            <person name="Detter J.C."/>
            <person name="Han C."/>
            <person name="Tapia R."/>
            <person name="Schmutz J."/>
            <person name="Larimer F."/>
            <person name="Land M."/>
            <person name="Hauser L."/>
            <person name="Kyrpides N."/>
            <person name="Mikhailova N."/>
            <person name="Nelson K."/>
            <person name="Gogarten J.P."/>
            <person name="Noll K."/>
            <person name="Richardson P."/>
        </authorList>
    </citation>
    <scope>NUCLEOTIDE SEQUENCE [LARGE SCALE GENOMIC DNA]</scope>
    <source>
        <strain>ATCC BAA-488 / DSM 13995 / JCM 10881 / RKU-1</strain>
    </source>
</reference>
<dbReference type="EMBL" id="CP000702">
    <property type="protein sequence ID" value="ABQ46679.1"/>
    <property type="molecule type" value="Genomic_DNA"/>
</dbReference>
<dbReference type="RefSeq" id="WP_011943269.1">
    <property type="nucleotide sequence ID" value="NC_009486.1"/>
</dbReference>
<dbReference type="SMR" id="A5IKF6"/>
<dbReference type="STRING" id="390874.Tpet_0659"/>
<dbReference type="KEGG" id="tpt:Tpet_0659"/>
<dbReference type="eggNOG" id="COG0322">
    <property type="taxonomic scope" value="Bacteria"/>
</dbReference>
<dbReference type="HOGENOM" id="CLU_014841_3_2_0"/>
<dbReference type="Proteomes" id="UP000006558">
    <property type="component" value="Chromosome"/>
</dbReference>
<dbReference type="GO" id="GO:0005737">
    <property type="term" value="C:cytoplasm"/>
    <property type="evidence" value="ECO:0007669"/>
    <property type="project" value="UniProtKB-SubCell"/>
</dbReference>
<dbReference type="GO" id="GO:0009380">
    <property type="term" value="C:excinuclease repair complex"/>
    <property type="evidence" value="ECO:0007669"/>
    <property type="project" value="InterPro"/>
</dbReference>
<dbReference type="GO" id="GO:0003677">
    <property type="term" value="F:DNA binding"/>
    <property type="evidence" value="ECO:0007669"/>
    <property type="project" value="UniProtKB-UniRule"/>
</dbReference>
<dbReference type="GO" id="GO:0009381">
    <property type="term" value="F:excinuclease ABC activity"/>
    <property type="evidence" value="ECO:0007669"/>
    <property type="project" value="UniProtKB-UniRule"/>
</dbReference>
<dbReference type="GO" id="GO:0006289">
    <property type="term" value="P:nucleotide-excision repair"/>
    <property type="evidence" value="ECO:0007669"/>
    <property type="project" value="UniProtKB-UniRule"/>
</dbReference>
<dbReference type="GO" id="GO:0009432">
    <property type="term" value="P:SOS response"/>
    <property type="evidence" value="ECO:0007669"/>
    <property type="project" value="UniProtKB-UniRule"/>
</dbReference>
<dbReference type="CDD" id="cd10434">
    <property type="entry name" value="GIY-YIG_UvrC_Cho"/>
    <property type="match status" value="1"/>
</dbReference>
<dbReference type="FunFam" id="3.30.420.340:FF:000004">
    <property type="entry name" value="UvrABC system protein C"/>
    <property type="match status" value="1"/>
</dbReference>
<dbReference type="FunFam" id="3.40.1440.10:FF:000001">
    <property type="entry name" value="UvrABC system protein C"/>
    <property type="match status" value="1"/>
</dbReference>
<dbReference type="Gene3D" id="1.10.150.20">
    <property type="entry name" value="5' to 3' exonuclease, C-terminal subdomain"/>
    <property type="match status" value="1"/>
</dbReference>
<dbReference type="Gene3D" id="3.40.1440.10">
    <property type="entry name" value="GIY-YIG endonuclease"/>
    <property type="match status" value="1"/>
</dbReference>
<dbReference type="Gene3D" id="4.10.860.10">
    <property type="entry name" value="UVR domain"/>
    <property type="match status" value="1"/>
</dbReference>
<dbReference type="Gene3D" id="3.30.420.340">
    <property type="entry name" value="UvrC, RNAse H endonuclease domain"/>
    <property type="match status" value="1"/>
</dbReference>
<dbReference type="HAMAP" id="MF_00203">
    <property type="entry name" value="UvrC"/>
    <property type="match status" value="1"/>
</dbReference>
<dbReference type="InterPro" id="IPR000305">
    <property type="entry name" value="GIY-YIG_endonuc"/>
</dbReference>
<dbReference type="InterPro" id="IPR035901">
    <property type="entry name" value="GIY-YIG_endonuc_sf"/>
</dbReference>
<dbReference type="InterPro" id="IPR047296">
    <property type="entry name" value="GIY-YIG_UvrC_Cho"/>
</dbReference>
<dbReference type="InterPro" id="IPR010994">
    <property type="entry name" value="RuvA_2-like"/>
</dbReference>
<dbReference type="InterPro" id="IPR001943">
    <property type="entry name" value="UVR_dom"/>
</dbReference>
<dbReference type="InterPro" id="IPR036876">
    <property type="entry name" value="UVR_dom_sf"/>
</dbReference>
<dbReference type="InterPro" id="IPR050066">
    <property type="entry name" value="UvrABC_protein_C"/>
</dbReference>
<dbReference type="InterPro" id="IPR004791">
    <property type="entry name" value="UvrC"/>
</dbReference>
<dbReference type="InterPro" id="IPR001162">
    <property type="entry name" value="UvrC_RNase_H_dom"/>
</dbReference>
<dbReference type="InterPro" id="IPR038476">
    <property type="entry name" value="UvrC_RNase_H_dom_sf"/>
</dbReference>
<dbReference type="NCBIfam" id="TIGR00194">
    <property type="entry name" value="uvrC"/>
    <property type="match status" value="1"/>
</dbReference>
<dbReference type="PANTHER" id="PTHR30562:SF1">
    <property type="entry name" value="UVRABC SYSTEM PROTEIN C"/>
    <property type="match status" value="1"/>
</dbReference>
<dbReference type="PANTHER" id="PTHR30562">
    <property type="entry name" value="UVRC/OXIDOREDUCTASE"/>
    <property type="match status" value="1"/>
</dbReference>
<dbReference type="Pfam" id="PF01541">
    <property type="entry name" value="GIY-YIG"/>
    <property type="match status" value="1"/>
</dbReference>
<dbReference type="Pfam" id="PF14520">
    <property type="entry name" value="HHH_5"/>
    <property type="match status" value="1"/>
</dbReference>
<dbReference type="Pfam" id="PF02151">
    <property type="entry name" value="UVR"/>
    <property type="match status" value="1"/>
</dbReference>
<dbReference type="Pfam" id="PF08459">
    <property type="entry name" value="UvrC_RNaseH_dom"/>
    <property type="match status" value="1"/>
</dbReference>
<dbReference type="SMART" id="SM00465">
    <property type="entry name" value="GIYc"/>
    <property type="match status" value="1"/>
</dbReference>
<dbReference type="SUPFAM" id="SSF46600">
    <property type="entry name" value="C-terminal UvrC-binding domain of UvrB"/>
    <property type="match status" value="1"/>
</dbReference>
<dbReference type="SUPFAM" id="SSF82771">
    <property type="entry name" value="GIY-YIG endonuclease"/>
    <property type="match status" value="1"/>
</dbReference>
<dbReference type="SUPFAM" id="SSF47781">
    <property type="entry name" value="RuvA domain 2-like"/>
    <property type="match status" value="1"/>
</dbReference>
<dbReference type="PROSITE" id="PS50164">
    <property type="entry name" value="GIY_YIG"/>
    <property type="match status" value="1"/>
</dbReference>
<dbReference type="PROSITE" id="PS50151">
    <property type="entry name" value="UVR"/>
    <property type="match status" value="1"/>
</dbReference>
<dbReference type="PROSITE" id="PS50165">
    <property type="entry name" value="UVRC"/>
    <property type="match status" value="1"/>
</dbReference>
<comment type="function">
    <text evidence="1">The UvrABC repair system catalyzes the recognition and processing of DNA lesions. UvrC both incises the 5' and 3' sides of the lesion. The N-terminal half is responsible for the 3' incision and the C-terminal half is responsible for the 5' incision.</text>
</comment>
<comment type="subunit">
    <text evidence="1">Interacts with UvrB in an incision complex.</text>
</comment>
<comment type="subcellular location">
    <subcellularLocation>
        <location evidence="1">Cytoplasm</location>
    </subcellularLocation>
</comment>
<comment type="similarity">
    <text evidence="1">Belongs to the UvrC family.</text>
</comment>
<proteinExistence type="inferred from homology"/>
<protein>
    <recommendedName>
        <fullName evidence="1">UvrABC system protein C</fullName>
        <shortName evidence="1">Protein UvrC</shortName>
    </recommendedName>
    <alternativeName>
        <fullName evidence="1">Excinuclease ABC subunit C</fullName>
    </alternativeName>
</protein>
<accession>A5IKF6</accession>
<gene>
    <name evidence="1" type="primary">uvrC</name>
    <name type="ordered locus">Tpet_0659</name>
</gene>
<feature type="chain" id="PRO_1000077855" description="UvrABC system protein C">
    <location>
        <begin position="1"/>
        <end position="557"/>
    </location>
</feature>
<feature type="domain" description="GIY-YIG" evidence="1">
    <location>
        <begin position="14"/>
        <end position="89"/>
    </location>
</feature>
<feature type="domain" description="UVR" evidence="1">
    <location>
        <begin position="194"/>
        <end position="229"/>
    </location>
</feature>
<evidence type="ECO:0000255" key="1">
    <source>
        <dbReference type="HAMAP-Rule" id="MF_00203"/>
    </source>
</evidence>
<sequence>MKEKIRKKILLAPEEPGVYIFKNKGVPIYIGKAKRLSSRLRSYLNPQTEKVFRIVEEADELETIVVMNEREAFILEANLIKKYRPKYNVRLKDTNFYPYIRISDDEIPYVEIVKRKLRDGTYFGPYTSVQFVRNLLEILQKIMGFRTCKSDLKRIKRPCFLYHLGRCTGPCIGNIESHGEAVRRLKEFLSGNMEEVFDYLKEKMETHSRMLDFENAAKYRDLLLNLSNVLESQGVVFEESISCDVLVHAHDLFVVLRVRNGYLVGKISFEMEGGNVEDFIREYYVSGRGDIPKTLILESDLDEMDYSSLGFEYVGPPRSTTEEDLLEKAKKNLENELKMRGLRKEALEELMKLLNMKDFPYRIEGIDISHLQGKYTVASLVVFEDGFPKKSDYRRYKIEQDHPDDYESIRTVVKRRYSKHPLPNLLFVDGGIGQVNAAVEALKEIGKDCPVVGLAKKEETVVFENREIKLPHDHPVLRLLVQIRDETHRFAVSYHRKRREKESLRSVLDSVPGIGPIRKKKLIEYFGSLENIRSASLEEIARVIGSAEIAKRILDVL</sequence>
<organism>
    <name type="scientific">Thermotoga petrophila (strain ATCC BAA-488 / DSM 13995 / JCM 10881 / RKU-1)</name>
    <dbReference type="NCBI Taxonomy" id="390874"/>
    <lineage>
        <taxon>Bacteria</taxon>
        <taxon>Thermotogati</taxon>
        <taxon>Thermotogota</taxon>
        <taxon>Thermotogae</taxon>
        <taxon>Thermotogales</taxon>
        <taxon>Thermotogaceae</taxon>
        <taxon>Thermotoga</taxon>
    </lineage>
</organism>
<keyword id="KW-0963">Cytoplasm</keyword>
<keyword id="KW-0227">DNA damage</keyword>
<keyword id="KW-0228">DNA excision</keyword>
<keyword id="KW-0234">DNA repair</keyword>
<keyword id="KW-0267">Excision nuclease</keyword>
<keyword id="KW-0742">SOS response</keyword>